<sequence>MPVTHRKSDASDMNSDTSPSCRLRAFSRGGSLESRSSSSRSRSFTLDDESLKYLTHEEKDVLLFFEETIDSLDEDFEEPVLCDGGVCCLCSPSLEESTSSPSEPEDVIDLVQPAPGAGEAEGLPEGTQAAGPAPAGKEHRKQDAETPPPPDPPAPETLLAPPPLPSTPDPPRRELRAPSPPVEHPRLLRSVPTPLVMAQKISERMAGNEALSPTSPFREGRPGEWRTPAARGPRSGDPGPGPSHPAQPKAPRFPSNIIVTNGAAREPRRTLSRAAVSVQERRAQVLATIHGHAGAFPAAGDAGEGAPGGGSSPERVARGRGLPGPAESLRAGGQAPRGPALANGFPSAHEALKSAPSSFAPAGKSLCFRPGPALPSTRARQSFPGPRQPNGAQDWRRADSLPRPQGITVQFAGRGSSEEARREALRKLGLLRESS</sequence>
<evidence type="ECO:0000256" key="1">
    <source>
        <dbReference type="SAM" id="MobiDB-lite"/>
    </source>
</evidence>
<evidence type="ECO:0000269" key="2">
    <source>
    </source>
</evidence>
<evidence type="ECO:0000269" key="3">
    <source ref="4"/>
</evidence>
<evidence type="ECO:0000303" key="4">
    <source>
    </source>
</evidence>
<evidence type="ECO:0000305" key="5"/>
<evidence type="ECO:0007744" key="6">
    <source>
    </source>
</evidence>
<evidence type="ECO:0007744" key="7">
    <source>
    </source>
</evidence>
<evidence type="ECO:0007744" key="8">
    <source>
    </source>
</evidence>
<evidence type="ECO:0007744" key="9">
    <source>
    </source>
</evidence>
<evidence type="ECO:0007744" key="10">
    <source>
    </source>
</evidence>
<evidence type="ECO:0007744" key="11">
    <source>
    </source>
</evidence>
<evidence type="ECO:0007744" key="12">
    <source>
    </source>
</evidence>
<dbReference type="EMBL" id="AL138898">
    <property type="status" value="NOT_ANNOTATED_CDS"/>
    <property type="molecule type" value="Genomic_DNA"/>
</dbReference>
<dbReference type="EMBL" id="CH471072">
    <property type="protein sequence ID" value="EAW86336.1"/>
    <property type="molecule type" value="Genomic_DNA"/>
</dbReference>
<dbReference type="EMBL" id="CH471072">
    <property type="protein sequence ID" value="EAW86339.1"/>
    <property type="molecule type" value="Genomic_DNA"/>
</dbReference>
<dbReference type="EMBL" id="BC017269">
    <property type="protein sequence ID" value="AAH17269.1"/>
    <property type="molecule type" value="mRNA"/>
</dbReference>
<dbReference type="EMBL" id="BC029134">
    <property type="protein sequence ID" value="AAH29134.2"/>
    <property type="molecule type" value="mRNA"/>
</dbReference>
<dbReference type="EMBL" id="BC048800">
    <property type="protein sequence ID" value="AAH48800.1"/>
    <property type="molecule type" value="mRNA"/>
</dbReference>
<dbReference type="CCDS" id="CCDS7085.1">
    <molecule id="Q86WR7-1"/>
</dbReference>
<dbReference type="RefSeq" id="NP_694988.3">
    <molecule id="Q86WR7-1"/>
    <property type="nucleotide sequence ID" value="NM_153256.3"/>
</dbReference>
<dbReference type="RefSeq" id="XP_011517740.1">
    <molecule id="Q86WR7-1"/>
    <property type="nucleotide sequence ID" value="XM_011519438.3"/>
</dbReference>
<dbReference type="RefSeq" id="XP_016871517.1">
    <property type="nucleotide sequence ID" value="XM_017016028.1"/>
</dbReference>
<dbReference type="RefSeq" id="XP_054221391.1">
    <molecule id="Q86WR7-1"/>
    <property type="nucleotide sequence ID" value="XM_054365416.1"/>
</dbReference>
<dbReference type="RefSeq" id="XP_054221392.1">
    <molecule id="Q86WR7-1"/>
    <property type="nucleotide sequence ID" value="XM_054365417.1"/>
</dbReference>
<dbReference type="SMR" id="Q86WR7"/>
<dbReference type="BioGRID" id="129035">
    <property type="interactions" value="61"/>
</dbReference>
<dbReference type="FunCoup" id="Q86WR7">
    <property type="interactions" value="91"/>
</dbReference>
<dbReference type="IntAct" id="Q86WR7">
    <property type="interactions" value="48"/>
</dbReference>
<dbReference type="STRING" id="9606.ENSP00000277570"/>
<dbReference type="GlyGen" id="Q86WR7">
    <property type="glycosylation" value="1 site, 1 O-linked glycan (1 site)"/>
</dbReference>
<dbReference type="iPTMnet" id="Q86WR7"/>
<dbReference type="PhosphoSitePlus" id="Q86WR7"/>
<dbReference type="BioMuta" id="PROSER2"/>
<dbReference type="DMDM" id="73620073"/>
<dbReference type="jPOST" id="Q86WR7"/>
<dbReference type="MassIVE" id="Q86WR7"/>
<dbReference type="PaxDb" id="9606-ENSP00000277570"/>
<dbReference type="PeptideAtlas" id="Q86WR7"/>
<dbReference type="ProteomicsDB" id="70193">
    <molecule id="Q86WR7-1"/>
</dbReference>
<dbReference type="ProteomicsDB" id="70194">
    <molecule id="Q86WR7-2"/>
</dbReference>
<dbReference type="Pumba" id="Q86WR7"/>
<dbReference type="Antibodypedia" id="52497">
    <property type="antibodies" value="52 antibodies from 12 providers"/>
</dbReference>
<dbReference type="DNASU" id="254427"/>
<dbReference type="Ensembl" id="ENST00000277570.10">
    <molecule id="Q86WR7-1"/>
    <property type="protein sequence ID" value="ENSP00000277570.5"/>
    <property type="gene ID" value="ENSG00000148426.14"/>
</dbReference>
<dbReference type="GeneID" id="254427"/>
<dbReference type="KEGG" id="hsa:254427"/>
<dbReference type="MANE-Select" id="ENST00000277570.10">
    <property type="protein sequence ID" value="ENSP00000277570.5"/>
    <property type="RefSeq nucleotide sequence ID" value="NM_153256.4"/>
    <property type="RefSeq protein sequence ID" value="NP_694988.3"/>
</dbReference>
<dbReference type="UCSC" id="uc001ikx.3">
    <molecule id="Q86WR7-1"/>
    <property type="organism name" value="human"/>
</dbReference>
<dbReference type="AGR" id="HGNC:23728"/>
<dbReference type="CTD" id="254427"/>
<dbReference type="DisGeNET" id="254427"/>
<dbReference type="GeneCards" id="PROSER2"/>
<dbReference type="HGNC" id="HGNC:23728">
    <property type="gene designation" value="PROSER2"/>
</dbReference>
<dbReference type="HPA" id="ENSG00000148426">
    <property type="expression patterns" value="Tissue enhanced (liver)"/>
</dbReference>
<dbReference type="neXtProt" id="NX_Q86WR7"/>
<dbReference type="OpenTargets" id="ENSG00000148426"/>
<dbReference type="PharmGKB" id="PA134910296"/>
<dbReference type="VEuPathDB" id="HostDB:ENSG00000148426"/>
<dbReference type="eggNOG" id="ENOG502QWQ9">
    <property type="taxonomic scope" value="Eukaryota"/>
</dbReference>
<dbReference type="GeneTree" id="ENSGT00940000154315"/>
<dbReference type="HOGENOM" id="CLU_050385_0_0_1"/>
<dbReference type="InParanoid" id="Q86WR7"/>
<dbReference type="OMA" id="RQPDCGQ"/>
<dbReference type="OrthoDB" id="8725016at2759"/>
<dbReference type="PAN-GO" id="Q86WR7">
    <property type="GO annotations" value="0 GO annotations based on evolutionary models"/>
</dbReference>
<dbReference type="PhylomeDB" id="Q86WR7"/>
<dbReference type="TreeFam" id="TF335482"/>
<dbReference type="PathwayCommons" id="Q86WR7"/>
<dbReference type="SignaLink" id="Q86WR7"/>
<dbReference type="BioGRID-ORCS" id="254427">
    <property type="hits" value="16 hits in 1160 CRISPR screens"/>
</dbReference>
<dbReference type="ChiTaRS" id="PROSER2">
    <property type="organism name" value="human"/>
</dbReference>
<dbReference type="GenomeRNAi" id="254427"/>
<dbReference type="Pharos" id="Q86WR7">
    <property type="development level" value="Tdark"/>
</dbReference>
<dbReference type="PRO" id="PR:Q86WR7"/>
<dbReference type="Proteomes" id="UP000005640">
    <property type="component" value="Chromosome 10"/>
</dbReference>
<dbReference type="RNAct" id="Q86WR7">
    <property type="molecule type" value="protein"/>
</dbReference>
<dbReference type="Bgee" id="ENSG00000148426">
    <property type="expression patterns" value="Expressed in pancreatic ductal cell and 143 other cell types or tissues"/>
</dbReference>
<dbReference type="ExpressionAtlas" id="Q86WR7">
    <property type="expression patterns" value="baseline and differential"/>
</dbReference>
<dbReference type="PANTHER" id="PTHR16095:SF9">
    <property type="entry name" value="PROLINE AND SERINE-RICH PROTEIN 2"/>
    <property type="match status" value="1"/>
</dbReference>
<dbReference type="PANTHER" id="PTHR16095">
    <property type="entry name" value="TRANSMEMBRANE PROTEIN 143 FAMILY MEMBER"/>
    <property type="match status" value="1"/>
</dbReference>
<dbReference type="Pfam" id="PF15385">
    <property type="entry name" value="SARG"/>
    <property type="match status" value="1"/>
</dbReference>
<gene>
    <name type="primary">PROSER2</name>
    <name type="synonym">C10orf47</name>
</gene>
<organism>
    <name type="scientific">Homo sapiens</name>
    <name type="common">Human</name>
    <dbReference type="NCBI Taxonomy" id="9606"/>
    <lineage>
        <taxon>Eukaryota</taxon>
        <taxon>Metazoa</taxon>
        <taxon>Chordata</taxon>
        <taxon>Craniata</taxon>
        <taxon>Vertebrata</taxon>
        <taxon>Euteleostomi</taxon>
        <taxon>Mammalia</taxon>
        <taxon>Eutheria</taxon>
        <taxon>Euarchontoglires</taxon>
        <taxon>Primates</taxon>
        <taxon>Haplorrhini</taxon>
        <taxon>Catarrhini</taxon>
        <taxon>Hominidae</taxon>
        <taxon>Homo</taxon>
    </lineage>
</organism>
<reference key="1">
    <citation type="journal article" date="2004" name="Nature">
        <title>The DNA sequence and comparative analysis of human chromosome 10.</title>
        <authorList>
            <person name="Deloukas P."/>
            <person name="Earthrowl M.E."/>
            <person name="Grafham D.V."/>
            <person name="Rubenfield M."/>
            <person name="French L."/>
            <person name="Steward C.A."/>
            <person name="Sims S.K."/>
            <person name="Jones M.C."/>
            <person name="Searle S."/>
            <person name="Scott C."/>
            <person name="Howe K."/>
            <person name="Hunt S.E."/>
            <person name="Andrews T.D."/>
            <person name="Gilbert J.G.R."/>
            <person name="Swarbreck D."/>
            <person name="Ashurst J.L."/>
            <person name="Taylor A."/>
            <person name="Battles J."/>
            <person name="Bird C.P."/>
            <person name="Ainscough R."/>
            <person name="Almeida J.P."/>
            <person name="Ashwell R.I.S."/>
            <person name="Ambrose K.D."/>
            <person name="Babbage A.K."/>
            <person name="Bagguley C.L."/>
            <person name="Bailey J."/>
            <person name="Banerjee R."/>
            <person name="Bates K."/>
            <person name="Beasley H."/>
            <person name="Bray-Allen S."/>
            <person name="Brown A.J."/>
            <person name="Brown J.Y."/>
            <person name="Burford D.C."/>
            <person name="Burrill W."/>
            <person name="Burton J."/>
            <person name="Cahill P."/>
            <person name="Camire D."/>
            <person name="Carter N.P."/>
            <person name="Chapman J.C."/>
            <person name="Clark S.Y."/>
            <person name="Clarke G."/>
            <person name="Clee C.M."/>
            <person name="Clegg S."/>
            <person name="Corby N."/>
            <person name="Coulson A."/>
            <person name="Dhami P."/>
            <person name="Dutta I."/>
            <person name="Dunn M."/>
            <person name="Faulkner L."/>
            <person name="Frankish A."/>
            <person name="Frankland J.A."/>
            <person name="Garner P."/>
            <person name="Garnett J."/>
            <person name="Gribble S."/>
            <person name="Griffiths C."/>
            <person name="Grocock R."/>
            <person name="Gustafson E."/>
            <person name="Hammond S."/>
            <person name="Harley J.L."/>
            <person name="Hart E."/>
            <person name="Heath P.D."/>
            <person name="Ho T.P."/>
            <person name="Hopkins B."/>
            <person name="Horne J."/>
            <person name="Howden P.J."/>
            <person name="Huckle E."/>
            <person name="Hynds C."/>
            <person name="Johnson C."/>
            <person name="Johnson D."/>
            <person name="Kana A."/>
            <person name="Kay M."/>
            <person name="Kimberley A.M."/>
            <person name="Kershaw J.K."/>
            <person name="Kokkinaki M."/>
            <person name="Laird G.K."/>
            <person name="Lawlor S."/>
            <person name="Lee H.M."/>
            <person name="Leongamornlert D.A."/>
            <person name="Laird G."/>
            <person name="Lloyd C."/>
            <person name="Lloyd D.M."/>
            <person name="Loveland J."/>
            <person name="Lovell J."/>
            <person name="McLaren S."/>
            <person name="McLay K.E."/>
            <person name="McMurray A."/>
            <person name="Mashreghi-Mohammadi M."/>
            <person name="Matthews L."/>
            <person name="Milne S."/>
            <person name="Nickerson T."/>
            <person name="Nguyen M."/>
            <person name="Overton-Larty E."/>
            <person name="Palmer S.A."/>
            <person name="Pearce A.V."/>
            <person name="Peck A.I."/>
            <person name="Pelan S."/>
            <person name="Phillimore B."/>
            <person name="Porter K."/>
            <person name="Rice C.M."/>
            <person name="Rogosin A."/>
            <person name="Ross M.T."/>
            <person name="Sarafidou T."/>
            <person name="Sehra H.K."/>
            <person name="Shownkeen R."/>
            <person name="Skuce C.D."/>
            <person name="Smith M."/>
            <person name="Standring L."/>
            <person name="Sycamore N."/>
            <person name="Tester J."/>
            <person name="Thorpe A."/>
            <person name="Torcasso W."/>
            <person name="Tracey A."/>
            <person name="Tromans A."/>
            <person name="Tsolas J."/>
            <person name="Wall M."/>
            <person name="Walsh J."/>
            <person name="Wang H."/>
            <person name="Weinstock K."/>
            <person name="West A.P."/>
            <person name="Willey D.L."/>
            <person name="Whitehead S.L."/>
            <person name="Wilming L."/>
            <person name="Wray P.W."/>
            <person name="Young L."/>
            <person name="Chen Y."/>
            <person name="Lovering R.C."/>
            <person name="Moschonas N.K."/>
            <person name="Siebert R."/>
            <person name="Fechtel K."/>
            <person name="Bentley D."/>
            <person name="Durbin R.M."/>
            <person name="Hubbard T."/>
            <person name="Doucette-Stamm L."/>
            <person name="Beck S."/>
            <person name="Smith D.R."/>
            <person name="Rogers J."/>
        </authorList>
    </citation>
    <scope>NUCLEOTIDE SEQUENCE [LARGE SCALE GENOMIC DNA]</scope>
</reference>
<reference key="2">
    <citation type="submission" date="2005-09" db="EMBL/GenBank/DDBJ databases">
        <authorList>
            <person name="Mural R.J."/>
            <person name="Istrail S."/>
            <person name="Sutton G.G."/>
            <person name="Florea L."/>
            <person name="Halpern A.L."/>
            <person name="Mobarry C.M."/>
            <person name="Lippert R."/>
            <person name="Walenz B."/>
            <person name="Shatkay H."/>
            <person name="Dew I."/>
            <person name="Miller J.R."/>
            <person name="Flanigan M.J."/>
            <person name="Edwards N.J."/>
            <person name="Bolanos R."/>
            <person name="Fasulo D."/>
            <person name="Halldorsson B.V."/>
            <person name="Hannenhalli S."/>
            <person name="Turner R."/>
            <person name="Yooseph S."/>
            <person name="Lu F."/>
            <person name="Nusskern D.R."/>
            <person name="Shue B.C."/>
            <person name="Zheng X.H."/>
            <person name="Zhong F."/>
            <person name="Delcher A.L."/>
            <person name="Huson D.H."/>
            <person name="Kravitz S.A."/>
            <person name="Mouchard L."/>
            <person name="Reinert K."/>
            <person name="Remington K.A."/>
            <person name="Clark A.G."/>
            <person name="Waterman M.S."/>
            <person name="Eichler E.E."/>
            <person name="Adams M.D."/>
            <person name="Hunkapiller M.W."/>
            <person name="Myers E.W."/>
            <person name="Venter J.C."/>
        </authorList>
    </citation>
    <scope>NUCLEOTIDE SEQUENCE [LARGE SCALE GENOMIC DNA]</scope>
</reference>
<reference key="3">
    <citation type="journal article" date="2004" name="Genome Res.">
        <title>The status, quality, and expansion of the NIH full-length cDNA project: the Mammalian Gene Collection (MGC).</title>
        <authorList>
            <consortium name="The MGC Project Team"/>
        </authorList>
    </citation>
    <scope>NUCLEOTIDE SEQUENCE [LARGE SCALE MRNA] (ISOFORMS 1 AND 2)</scope>
    <scope>VARIANT VAL-412</scope>
    <source>
        <tissue>Blood</tissue>
        <tissue>Kidney</tissue>
    </source>
</reference>
<reference key="4">
    <citation type="submission" date="2010-01" db="UniProtKB">
        <authorList>
            <person name="Bienvenut W.V."/>
            <person name="Dozynkiewicz M."/>
            <person name="Norman J.C."/>
        </authorList>
    </citation>
    <scope>PROTEIN SEQUENCE OF 41-52; 174-186; 190-218; 250-268; 319-330; 338-364; 381-387; 398-414 AND 428-435</scope>
    <scope>PHOSPHORYLATION AT SER-43; SER-179 AND SER-212</scope>
    <scope>METHYLATION AT ARG-252 AND ARG-320</scope>
    <scope>IDENTIFICATION BY MASS SPECTROMETRY</scope>
    <source>
        <tissue>Ovarian carcinoma</tissue>
    </source>
</reference>
<reference key="5">
    <citation type="journal article" date="2008" name="J. Proteome Res.">
        <title>Phosphoproteome of resting human platelets.</title>
        <authorList>
            <person name="Zahedi R.P."/>
            <person name="Lewandrowski U."/>
            <person name="Wiesner J."/>
            <person name="Wortelkamp S."/>
            <person name="Moebius J."/>
            <person name="Schuetz C."/>
            <person name="Walter U."/>
            <person name="Gambaryan S."/>
            <person name="Sickmann A."/>
        </authorList>
    </citation>
    <scope>PHOSPHORYLATION [LARGE SCALE ANALYSIS] AT SER-179</scope>
    <scope>IDENTIFICATION BY MASS SPECTROMETRY [LARGE SCALE ANALYSIS]</scope>
    <source>
        <tissue>Platelet</tissue>
    </source>
</reference>
<reference key="6">
    <citation type="journal article" date="2008" name="Proc. Natl. Acad. Sci. U.S.A.">
        <title>A quantitative atlas of mitotic phosphorylation.</title>
        <authorList>
            <person name="Dephoure N."/>
            <person name="Zhou C."/>
            <person name="Villen J."/>
            <person name="Beausoleil S.A."/>
            <person name="Bakalarski C.E."/>
            <person name="Elledge S.J."/>
            <person name="Gygi S.P."/>
        </authorList>
    </citation>
    <scope>PHOSPHORYLATION [LARGE SCALE ANALYSIS] AT SER-43; THR-146; THR-167 AND SER-212</scope>
    <scope>IDENTIFICATION BY MASS SPECTROMETRY [LARGE SCALE ANALYSIS]</scope>
    <source>
        <tissue>Cervix carcinoma</tissue>
    </source>
</reference>
<reference key="7">
    <citation type="journal article" date="2009" name="Sci. Signal.">
        <title>Quantitative phosphoproteomic analysis of T cell receptor signaling reveals system-wide modulation of protein-protein interactions.</title>
        <authorList>
            <person name="Mayya V."/>
            <person name="Lundgren D.H."/>
            <person name="Hwang S.-I."/>
            <person name="Rezaul K."/>
            <person name="Wu L."/>
            <person name="Eng J.K."/>
            <person name="Rodionov V."/>
            <person name="Han D.K."/>
        </authorList>
    </citation>
    <scope>PHOSPHORYLATION [LARGE SCALE ANALYSIS] AT SER-43 AND SER-212</scope>
    <scope>IDENTIFICATION BY MASS SPECTROMETRY [LARGE SCALE ANALYSIS]</scope>
    <source>
        <tissue>Leukemic T-cell</tissue>
    </source>
</reference>
<reference key="8">
    <citation type="journal article" date="2010" name="Sci. Signal.">
        <title>Quantitative phosphoproteomics reveals widespread full phosphorylation site occupancy during mitosis.</title>
        <authorList>
            <person name="Olsen J.V."/>
            <person name="Vermeulen M."/>
            <person name="Santamaria A."/>
            <person name="Kumar C."/>
            <person name="Miller M.L."/>
            <person name="Jensen L.J."/>
            <person name="Gnad F."/>
            <person name="Cox J."/>
            <person name="Jensen T.S."/>
            <person name="Nigg E.A."/>
            <person name="Brunak S."/>
            <person name="Mann M."/>
        </authorList>
    </citation>
    <scope>PHOSPHORYLATION [LARGE SCALE ANALYSIS] AT SER-43; SER-179; SER-212 AND SER-215</scope>
    <scope>IDENTIFICATION BY MASS SPECTROMETRY [LARGE SCALE ANALYSIS]</scope>
    <source>
        <tissue>Cervix carcinoma</tissue>
    </source>
</reference>
<reference key="9">
    <citation type="journal article" date="2011" name="Sci. Signal.">
        <title>System-wide temporal characterization of the proteome and phosphoproteome of human embryonic stem cell differentiation.</title>
        <authorList>
            <person name="Rigbolt K.T."/>
            <person name="Prokhorova T.A."/>
            <person name="Akimov V."/>
            <person name="Henningsen J."/>
            <person name="Johansen P.T."/>
            <person name="Kratchmarova I."/>
            <person name="Kassem M."/>
            <person name="Mann M."/>
            <person name="Olsen J.V."/>
            <person name="Blagoev B."/>
        </authorList>
    </citation>
    <scope>IDENTIFICATION BY MASS SPECTROMETRY [LARGE SCALE ANALYSIS]</scope>
</reference>
<reference key="10">
    <citation type="journal article" date="2013" name="J. Proteome Res.">
        <title>Toward a comprehensive characterization of a human cancer cell phosphoproteome.</title>
        <authorList>
            <person name="Zhou H."/>
            <person name="Di Palma S."/>
            <person name="Preisinger C."/>
            <person name="Peng M."/>
            <person name="Polat A.N."/>
            <person name="Heck A.J."/>
            <person name="Mohammed S."/>
        </authorList>
    </citation>
    <scope>PHOSPHORYLATION [LARGE SCALE ANALYSIS] AT SER-8; SER-43; THR-45; SER-179; SER-212; SER-215; SER-312 AND SER-400</scope>
    <scope>IDENTIFICATION BY MASS SPECTROMETRY [LARGE SCALE ANALYSIS]</scope>
    <source>
        <tissue>Cervix carcinoma</tissue>
        <tissue>Erythroleukemia</tissue>
    </source>
</reference>
<reference key="11">
    <citation type="journal article" date="2014" name="J. Proteomics">
        <title>An enzyme assisted RP-RPLC approach for in-depth analysis of human liver phosphoproteome.</title>
        <authorList>
            <person name="Bian Y."/>
            <person name="Song C."/>
            <person name="Cheng K."/>
            <person name="Dong M."/>
            <person name="Wang F."/>
            <person name="Huang J."/>
            <person name="Sun D."/>
            <person name="Wang L."/>
            <person name="Ye M."/>
            <person name="Zou H."/>
        </authorList>
    </citation>
    <scope>PHOSPHORYLATION [LARGE SCALE ANALYSIS] AT SER-166 AND SER-179</scope>
    <scope>IDENTIFICATION BY MASS SPECTROMETRY [LARGE SCALE ANALYSIS]</scope>
    <source>
        <tissue>Liver</tissue>
    </source>
</reference>
<reference key="12">
    <citation type="journal article" date="2014" name="Mol. Cell. Proteomics">
        <title>Immunoaffinity enrichment and mass spectrometry analysis of protein methylation.</title>
        <authorList>
            <person name="Guo A."/>
            <person name="Gu H."/>
            <person name="Zhou J."/>
            <person name="Mulhern D."/>
            <person name="Wang Y."/>
            <person name="Lee K.A."/>
            <person name="Yang V."/>
            <person name="Aguiar M."/>
            <person name="Kornhauser J."/>
            <person name="Jia X."/>
            <person name="Ren J."/>
            <person name="Beausoleil S.A."/>
            <person name="Silva J.C."/>
            <person name="Vemulapalli V."/>
            <person name="Bedford M.T."/>
            <person name="Comb M.J."/>
        </authorList>
    </citation>
    <scope>METHYLATION [LARGE SCALE ANALYSIS] AT ARG-252; ARG-320; ARG-378 AND ARG-414</scope>
    <scope>IDENTIFICATION BY MASS SPECTROMETRY [LARGE SCALE ANALYSIS]</scope>
    <source>
        <tissue>Colon carcinoma</tissue>
    </source>
</reference>
<comment type="interaction">
    <interactant intactId="EBI-2880603">
        <id>Q86WR7</id>
    </interactant>
    <interactant intactId="EBI-1104564">
        <id>Q9Y316</id>
        <label>MEMO1</label>
    </interactant>
    <organismsDiffer>false</organismsDiffer>
    <experiments>2</experiments>
</comment>
<comment type="interaction">
    <interactant intactId="EBI-2880603">
        <id>Q86WR7</id>
    </interactant>
    <interactant intactId="EBI-752420">
        <id>Q9NUX5</id>
        <label>POT1</label>
    </interactant>
    <organismsDiffer>false</organismsDiffer>
    <experiments>2</experiments>
</comment>
<comment type="interaction">
    <interactant intactId="EBI-13089670">
        <id>Q86WR7-2</id>
    </interactant>
    <interactant intactId="EBI-10192241">
        <id>O95833</id>
        <label>CLIC3</label>
    </interactant>
    <organismsDiffer>false</organismsDiffer>
    <experiments>5</experiments>
</comment>
<comment type="interaction">
    <interactant intactId="EBI-13089670">
        <id>Q86WR7-2</id>
    </interactant>
    <interactant intactId="EBI-399080">
        <id>Q92993</id>
        <label>KAT5</label>
    </interactant>
    <organismsDiffer>false</organismsDiffer>
    <experiments>3</experiments>
</comment>
<comment type="interaction">
    <interactant intactId="EBI-13089670">
        <id>Q86WR7-2</id>
    </interactant>
    <interactant intactId="EBI-740195">
        <id>Q9BUL8</id>
        <label>PDCD10</label>
    </interactant>
    <organismsDiffer>false</organismsDiffer>
    <experiments>3</experiments>
</comment>
<comment type="alternative products">
    <event type="alternative splicing"/>
    <isoform>
        <id>Q86WR7-1</id>
        <name>1</name>
        <sequence type="displayed"/>
    </isoform>
    <isoform>
        <id>Q86WR7-2</id>
        <name>2</name>
        <sequence type="described" ref="VSP_014955"/>
    </isoform>
</comment>
<protein>
    <recommendedName>
        <fullName>Proline and serine-rich protein 2</fullName>
    </recommendedName>
</protein>
<keyword id="KW-0025">Alternative splicing</keyword>
<keyword id="KW-0903">Direct protein sequencing</keyword>
<keyword id="KW-0488">Methylation</keyword>
<keyword id="KW-0597">Phosphoprotein</keyword>
<keyword id="KW-1267">Proteomics identification</keyword>
<keyword id="KW-1185">Reference proteome</keyword>
<name>PRSR2_HUMAN</name>
<accession>Q86WR7</accession>
<accession>D3DRR8</accession>
<accession>Q5W0J9</accession>
<accession>Q5W0K0</accession>
<accession>Q5W0K1</accession>
<accession>Q5W0K2</accession>
<accession>Q6PJC8</accession>
<accession>Q8N317</accession>
<feature type="chain" id="PRO_0000089792" description="Proline and serine-rich protein 2">
    <location>
        <begin position="1"/>
        <end position="435"/>
    </location>
</feature>
<feature type="region of interest" description="Disordered" evidence="1">
    <location>
        <begin position="1"/>
        <end position="22"/>
    </location>
</feature>
<feature type="region of interest" description="Disordered" evidence="1">
    <location>
        <begin position="92"/>
        <end position="276"/>
    </location>
</feature>
<feature type="region of interest" description="Disordered" evidence="1">
    <location>
        <begin position="295"/>
        <end position="420"/>
    </location>
</feature>
<feature type="compositionally biased region" description="Basic and acidic residues" evidence="1">
    <location>
        <begin position="1"/>
        <end position="10"/>
    </location>
</feature>
<feature type="compositionally biased region" description="Polar residues" evidence="1">
    <location>
        <begin position="11"/>
        <end position="20"/>
    </location>
</feature>
<feature type="compositionally biased region" description="Low complexity" evidence="1">
    <location>
        <begin position="92"/>
        <end position="102"/>
    </location>
</feature>
<feature type="compositionally biased region" description="Low complexity" evidence="1">
    <location>
        <begin position="113"/>
        <end position="126"/>
    </location>
</feature>
<feature type="compositionally biased region" description="Pro residues" evidence="1">
    <location>
        <begin position="146"/>
        <end position="169"/>
    </location>
</feature>
<feature type="compositionally biased region" description="Low complexity" evidence="1">
    <location>
        <begin position="228"/>
        <end position="237"/>
    </location>
</feature>
<feature type="compositionally biased region" description="Gly residues" evidence="1">
    <location>
        <begin position="302"/>
        <end position="311"/>
    </location>
</feature>
<feature type="modified residue" description="Phosphoserine" evidence="10">
    <location>
        <position position="8"/>
    </location>
</feature>
<feature type="modified residue" description="Phosphoserine" evidence="3 7 8 9 10">
    <location>
        <position position="43"/>
    </location>
</feature>
<feature type="modified residue" description="Phosphothreonine" evidence="10">
    <location>
        <position position="45"/>
    </location>
</feature>
<feature type="modified residue" description="Phosphothreonine" evidence="7">
    <location>
        <position position="146"/>
    </location>
</feature>
<feature type="modified residue" description="Phosphoserine" evidence="12">
    <location>
        <position position="166"/>
    </location>
</feature>
<feature type="modified residue" description="Phosphothreonine" evidence="7">
    <location>
        <position position="167"/>
    </location>
</feature>
<feature type="modified residue" description="Phosphoserine" evidence="3 6 9 10 12">
    <location>
        <position position="179"/>
    </location>
</feature>
<feature type="modified residue" description="Phosphoserine" evidence="3 7 8 9 10">
    <location>
        <position position="212"/>
    </location>
</feature>
<feature type="modified residue" description="Phosphoserine" evidence="9 10">
    <location>
        <position position="215"/>
    </location>
</feature>
<feature type="modified residue" description="Asymmetric dimethylarginine; alternate" evidence="11">
    <location>
        <position position="252"/>
    </location>
</feature>
<feature type="modified residue" description="Omega-N-methylarginine; alternate" evidence="3">
    <location>
        <position position="252"/>
    </location>
</feature>
<feature type="modified residue" description="Phosphoserine" evidence="10">
    <location>
        <position position="312"/>
    </location>
</feature>
<feature type="modified residue" description="Dimethylated arginine; alternate" evidence="3">
    <location>
        <position position="320"/>
    </location>
</feature>
<feature type="modified residue" description="Omega-N-methylarginine; alternate" evidence="3 11">
    <location>
        <position position="320"/>
    </location>
</feature>
<feature type="modified residue" description="Omega-N-methylarginine" evidence="11">
    <location>
        <position position="378"/>
    </location>
</feature>
<feature type="modified residue" description="Phosphoserine" evidence="10">
    <location>
        <position position="400"/>
    </location>
</feature>
<feature type="modified residue" description="Omega-N-methylarginine" evidence="11">
    <location>
        <position position="414"/>
    </location>
</feature>
<feature type="splice variant" id="VSP_014955" description="In isoform 2." evidence="4">
    <location>
        <begin position="245"/>
        <end position="338"/>
    </location>
</feature>
<feature type="sequence variant" id="VAR_023097" description="In dbSNP:rs12253554." evidence="2">
    <original>A</original>
    <variation>V</variation>
    <location>
        <position position="412"/>
    </location>
</feature>
<feature type="sequence conflict" description="In Ref. 3; AAH48800." evidence="5" ref="3">
    <original>P</original>
    <variation>R</variation>
    <location>
        <position position="323"/>
    </location>
</feature>
<proteinExistence type="evidence at protein level"/>